<gene>
    <name evidence="1" type="primary">groES</name>
    <name evidence="1" type="synonym">groS</name>
    <name type="ordered locus">BAMEG_0311</name>
</gene>
<comment type="function">
    <text evidence="1">Together with the chaperonin GroEL, plays an essential role in assisting protein folding. The GroEL-GroES system forms a nano-cage that allows encapsulation of the non-native substrate proteins and provides a physical environment optimized to promote and accelerate protein folding. GroES binds to the apical surface of the GroEL ring, thereby capping the opening of the GroEL channel.</text>
</comment>
<comment type="subunit">
    <text evidence="1">Heptamer of 7 subunits arranged in a ring. Interacts with the chaperonin GroEL.</text>
</comment>
<comment type="subcellular location">
    <subcellularLocation>
        <location evidence="1">Cytoplasm</location>
    </subcellularLocation>
</comment>
<comment type="similarity">
    <text evidence="1">Belongs to the GroES chaperonin family.</text>
</comment>
<feature type="chain" id="PRO_1000146885" description="Co-chaperonin GroES">
    <location>
        <begin position="1"/>
        <end position="94"/>
    </location>
</feature>
<proteinExistence type="inferred from homology"/>
<evidence type="ECO:0000255" key="1">
    <source>
        <dbReference type="HAMAP-Rule" id="MF_00580"/>
    </source>
</evidence>
<dbReference type="EMBL" id="CP001215">
    <property type="protein sequence ID" value="ACP14629.1"/>
    <property type="molecule type" value="Genomic_DNA"/>
</dbReference>
<dbReference type="RefSeq" id="WP_000917306.1">
    <property type="nucleotide sequence ID" value="NC_012581.1"/>
</dbReference>
<dbReference type="SMR" id="C3L506"/>
<dbReference type="GeneID" id="93010771"/>
<dbReference type="KEGG" id="bah:BAMEG_0311"/>
<dbReference type="HOGENOM" id="CLU_132825_2_0_9"/>
<dbReference type="GO" id="GO:0005737">
    <property type="term" value="C:cytoplasm"/>
    <property type="evidence" value="ECO:0007669"/>
    <property type="project" value="UniProtKB-SubCell"/>
</dbReference>
<dbReference type="GO" id="GO:0005524">
    <property type="term" value="F:ATP binding"/>
    <property type="evidence" value="ECO:0007669"/>
    <property type="project" value="InterPro"/>
</dbReference>
<dbReference type="GO" id="GO:0046872">
    <property type="term" value="F:metal ion binding"/>
    <property type="evidence" value="ECO:0007669"/>
    <property type="project" value="TreeGrafter"/>
</dbReference>
<dbReference type="GO" id="GO:0044183">
    <property type="term" value="F:protein folding chaperone"/>
    <property type="evidence" value="ECO:0007669"/>
    <property type="project" value="InterPro"/>
</dbReference>
<dbReference type="GO" id="GO:0051087">
    <property type="term" value="F:protein-folding chaperone binding"/>
    <property type="evidence" value="ECO:0007669"/>
    <property type="project" value="TreeGrafter"/>
</dbReference>
<dbReference type="GO" id="GO:0051082">
    <property type="term" value="F:unfolded protein binding"/>
    <property type="evidence" value="ECO:0007669"/>
    <property type="project" value="TreeGrafter"/>
</dbReference>
<dbReference type="GO" id="GO:0051085">
    <property type="term" value="P:chaperone cofactor-dependent protein refolding"/>
    <property type="evidence" value="ECO:0007669"/>
    <property type="project" value="TreeGrafter"/>
</dbReference>
<dbReference type="CDD" id="cd00320">
    <property type="entry name" value="cpn10"/>
    <property type="match status" value="1"/>
</dbReference>
<dbReference type="FunFam" id="2.30.33.40:FF:000001">
    <property type="entry name" value="10 kDa chaperonin"/>
    <property type="match status" value="1"/>
</dbReference>
<dbReference type="Gene3D" id="2.30.33.40">
    <property type="entry name" value="GroES chaperonin"/>
    <property type="match status" value="1"/>
</dbReference>
<dbReference type="HAMAP" id="MF_00580">
    <property type="entry name" value="CH10"/>
    <property type="match status" value="1"/>
</dbReference>
<dbReference type="InterPro" id="IPR020818">
    <property type="entry name" value="Chaperonin_GroES"/>
</dbReference>
<dbReference type="InterPro" id="IPR037124">
    <property type="entry name" value="Chaperonin_GroES_sf"/>
</dbReference>
<dbReference type="InterPro" id="IPR018369">
    <property type="entry name" value="Chaprnonin_Cpn10_CS"/>
</dbReference>
<dbReference type="InterPro" id="IPR011032">
    <property type="entry name" value="GroES-like_sf"/>
</dbReference>
<dbReference type="NCBIfam" id="NF001527">
    <property type="entry name" value="PRK00364.1-2"/>
    <property type="match status" value="1"/>
</dbReference>
<dbReference type="NCBIfam" id="NF001530">
    <property type="entry name" value="PRK00364.1-6"/>
    <property type="match status" value="1"/>
</dbReference>
<dbReference type="NCBIfam" id="NF001531">
    <property type="entry name" value="PRK00364.2-2"/>
    <property type="match status" value="1"/>
</dbReference>
<dbReference type="NCBIfam" id="NF001533">
    <property type="entry name" value="PRK00364.2-4"/>
    <property type="match status" value="1"/>
</dbReference>
<dbReference type="NCBIfam" id="NF001534">
    <property type="entry name" value="PRK00364.2-5"/>
    <property type="match status" value="1"/>
</dbReference>
<dbReference type="PANTHER" id="PTHR10772">
    <property type="entry name" value="10 KDA HEAT SHOCK PROTEIN"/>
    <property type="match status" value="1"/>
</dbReference>
<dbReference type="PANTHER" id="PTHR10772:SF58">
    <property type="entry name" value="CO-CHAPERONIN GROES"/>
    <property type="match status" value="1"/>
</dbReference>
<dbReference type="Pfam" id="PF00166">
    <property type="entry name" value="Cpn10"/>
    <property type="match status" value="1"/>
</dbReference>
<dbReference type="PRINTS" id="PR00297">
    <property type="entry name" value="CHAPERONIN10"/>
</dbReference>
<dbReference type="SMART" id="SM00883">
    <property type="entry name" value="Cpn10"/>
    <property type="match status" value="1"/>
</dbReference>
<dbReference type="SUPFAM" id="SSF50129">
    <property type="entry name" value="GroES-like"/>
    <property type="match status" value="1"/>
</dbReference>
<dbReference type="PROSITE" id="PS00681">
    <property type="entry name" value="CHAPERONINS_CPN10"/>
    <property type="match status" value="1"/>
</dbReference>
<accession>C3L506</accession>
<sequence length="94" mass="10070">MLKPLGDRVVIELVQAEEKTASGIVLPDTAKEKPQEGKVIAVGTGRVLENGERVALEVAAGDLIIFSKYAGTEVKYEGTDYLILRESDILAVIG</sequence>
<name>CH10_BACAC</name>
<organism>
    <name type="scientific">Bacillus anthracis (strain CDC 684 / NRRL 3495)</name>
    <dbReference type="NCBI Taxonomy" id="568206"/>
    <lineage>
        <taxon>Bacteria</taxon>
        <taxon>Bacillati</taxon>
        <taxon>Bacillota</taxon>
        <taxon>Bacilli</taxon>
        <taxon>Bacillales</taxon>
        <taxon>Bacillaceae</taxon>
        <taxon>Bacillus</taxon>
        <taxon>Bacillus cereus group</taxon>
    </lineage>
</organism>
<protein>
    <recommendedName>
        <fullName evidence="1">Co-chaperonin GroES</fullName>
    </recommendedName>
    <alternativeName>
        <fullName evidence="1">10 kDa chaperonin</fullName>
    </alternativeName>
    <alternativeName>
        <fullName evidence="1">Chaperonin-10</fullName>
        <shortName evidence="1">Cpn10</shortName>
    </alternativeName>
</protein>
<keyword id="KW-0143">Chaperone</keyword>
<keyword id="KW-0963">Cytoplasm</keyword>
<reference key="1">
    <citation type="submission" date="2008-10" db="EMBL/GenBank/DDBJ databases">
        <title>Genome sequence of Bacillus anthracis str. CDC 684.</title>
        <authorList>
            <person name="Dodson R.J."/>
            <person name="Munk A.C."/>
            <person name="Brettin T."/>
            <person name="Bruce D."/>
            <person name="Detter C."/>
            <person name="Tapia R."/>
            <person name="Han C."/>
            <person name="Sutton G."/>
            <person name="Sims D."/>
        </authorList>
    </citation>
    <scope>NUCLEOTIDE SEQUENCE [LARGE SCALE GENOMIC DNA]</scope>
    <source>
        <strain>CDC 684 / NRRL 3495</strain>
    </source>
</reference>